<accession>P62944</accession>
<accession>P21851</accession>
<feature type="initiator methionine" description="Removed" evidence="2">
    <location>
        <position position="1"/>
    </location>
</feature>
<feature type="chain" id="PRO_0000193744" description="AP-2 complex subunit beta">
    <location>
        <begin position="2"/>
        <end position="937"/>
    </location>
</feature>
<feature type="modified residue" description="N-acetylthreonine" evidence="2">
    <location>
        <position position="2"/>
    </location>
</feature>
<feature type="modified residue" description="Phosphoserine" evidence="2">
    <location>
        <position position="4"/>
    </location>
</feature>
<feature type="modified residue" description="N6-acetyllysine" evidence="2">
    <location>
        <position position="265"/>
    </location>
</feature>
<feature type="modified residue" description="Phosphotyrosine" evidence="2">
    <location>
        <position position="737"/>
    </location>
</feature>
<feature type="modified residue" description="Phosphotyrosine" evidence="11">
    <location>
        <position position="928"/>
    </location>
</feature>
<feature type="splice variant" id="VSP_011492" description="In isoform 2." evidence="9">
    <original>L</original>
    <variation>LLGSDLGGGIGGSPA</variation>
    <location>
        <position position="663"/>
    </location>
</feature>
<feature type="mutagenesis site" description="Abolishes interaction with PIP5K1C." evidence="6">
    <original>Q</original>
    <variation>A</variation>
    <location>
        <position position="756"/>
    </location>
</feature>
<feature type="mutagenesis site" description="Abolishes interaction with PIP5K1C." evidence="6">
    <original>Q</original>
    <variation>A</variation>
    <location>
        <position position="804"/>
    </location>
</feature>
<feature type="mutagenesis site" description="Abolishes interaction with PIP5K1C." evidence="6">
    <original>A</original>
    <variation>F</variation>
    <location>
        <position position="806"/>
    </location>
</feature>
<feature type="mutagenesis site" description="Abolishes interaction with PIP5K1C." evidence="6">
    <original>K</original>
    <variation>E</variation>
    <location>
        <position position="808"/>
    </location>
</feature>
<feature type="mutagenesis site" description="Abolishes interaction with PIP5K1C." evidence="6">
    <original>Y</original>
    <variation>A</variation>
    <location>
        <position position="815"/>
    </location>
</feature>
<feature type="strand" evidence="12">
    <location>
        <begin position="712"/>
        <end position="715"/>
    </location>
</feature>
<feature type="helix" evidence="12">
    <location>
        <begin position="717"/>
        <end position="719"/>
    </location>
</feature>
<feature type="turn" evidence="12">
    <location>
        <begin position="720"/>
        <end position="722"/>
    </location>
</feature>
<feature type="strand" evidence="12">
    <location>
        <begin position="723"/>
        <end position="732"/>
    </location>
</feature>
<feature type="strand" evidence="12">
    <location>
        <begin position="735"/>
        <end position="744"/>
    </location>
</feature>
<feature type="strand" evidence="12">
    <location>
        <begin position="746"/>
        <end position="748"/>
    </location>
</feature>
<feature type="strand" evidence="12">
    <location>
        <begin position="754"/>
        <end position="757"/>
    </location>
</feature>
<feature type="strand" evidence="12">
    <location>
        <begin position="765"/>
        <end position="768"/>
    </location>
</feature>
<feature type="strand" evidence="12">
    <location>
        <begin position="781"/>
        <end position="790"/>
    </location>
</feature>
<feature type="strand" evidence="12">
    <location>
        <begin position="802"/>
        <end position="808"/>
    </location>
</feature>
<feature type="strand" evidence="12">
    <location>
        <begin position="813"/>
        <end position="819"/>
    </location>
</feature>
<feature type="helix" evidence="12">
    <location>
        <begin position="822"/>
        <end position="825"/>
    </location>
</feature>
<feature type="helix" evidence="12">
    <location>
        <begin position="834"/>
        <end position="843"/>
    </location>
</feature>
<feature type="helix" evidence="12">
    <location>
        <begin position="846"/>
        <end position="848"/>
    </location>
</feature>
<feature type="strand" evidence="12">
    <location>
        <begin position="850"/>
        <end position="854"/>
    </location>
</feature>
<feature type="helix" evidence="12">
    <location>
        <begin position="861"/>
        <end position="870"/>
    </location>
</feature>
<feature type="strand" evidence="12">
    <location>
        <begin position="874"/>
        <end position="881"/>
    </location>
</feature>
<feature type="strand" evidence="12">
    <location>
        <begin position="884"/>
        <end position="893"/>
    </location>
</feature>
<feature type="strand" evidence="12">
    <location>
        <begin position="898"/>
        <end position="905"/>
    </location>
</feature>
<feature type="strand" evidence="12">
    <location>
        <begin position="912"/>
        <end position="917"/>
    </location>
</feature>
<feature type="helix" evidence="12">
    <location>
        <begin position="921"/>
        <end position="923"/>
    </location>
</feature>
<feature type="helix" evidence="12">
    <location>
        <begin position="924"/>
        <end position="935"/>
    </location>
</feature>
<gene>
    <name type="primary">Ap2b1</name>
    <name type="synonym">Clapb1</name>
</gene>
<keyword id="KW-0002">3D-structure</keyword>
<keyword id="KW-0007">Acetylation</keyword>
<keyword id="KW-0025">Alternative splicing</keyword>
<keyword id="KW-1003">Cell membrane</keyword>
<keyword id="KW-0168">Coated pit</keyword>
<keyword id="KW-0254">Endocytosis</keyword>
<keyword id="KW-0472">Membrane</keyword>
<keyword id="KW-0597">Phosphoprotein</keyword>
<keyword id="KW-0653">Protein transport</keyword>
<keyword id="KW-1185">Reference proteome</keyword>
<keyword id="KW-0813">Transport</keyword>
<proteinExistence type="evidence at protein level"/>
<organism>
    <name type="scientific">Rattus norvegicus</name>
    <name type="common">Rat</name>
    <dbReference type="NCBI Taxonomy" id="10116"/>
    <lineage>
        <taxon>Eukaryota</taxon>
        <taxon>Metazoa</taxon>
        <taxon>Chordata</taxon>
        <taxon>Craniata</taxon>
        <taxon>Vertebrata</taxon>
        <taxon>Euteleostomi</taxon>
        <taxon>Mammalia</taxon>
        <taxon>Eutheria</taxon>
        <taxon>Euarchontoglires</taxon>
        <taxon>Glires</taxon>
        <taxon>Rodentia</taxon>
        <taxon>Myomorpha</taxon>
        <taxon>Muroidea</taxon>
        <taxon>Muridae</taxon>
        <taxon>Murinae</taxon>
        <taxon>Rattus</taxon>
    </lineage>
</organism>
<dbReference type="EMBL" id="M34176">
    <property type="protein sequence ID" value="AAA40797.1"/>
    <property type="molecule type" value="mRNA"/>
</dbReference>
<dbReference type="EMBL" id="M77246">
    <property type="protein sequence ID" value="AAA40808.1"/>
    <property type="molecule type" value="mRNA"/>
</dbReference>
<dbReference type="PIR" id="C35553">
    <property type="entry name" value="C35553"/>
</dbReference>
<dbReference type="RefSeq" id="NP_542150.1">
    <molecule id="P62944-2"/>
    <property type="nucleotide sequence ID" value="NM_080583.2"/>
</dbReference>
<dbReference type="RefSeq" id="XP_008766157.1">
    <property type="nucleotide sequence ID" value="XM_008767935.2"/>
</dbReference>
<dbReference type="RefSeq" id="XP_008766158.1">
    <molecule id="P62944-2"/>
    <property type="nucleotide sequence ID" value="XM_008767936.4"/>
</dbReference>
<dbReference type="RefSeq" id="XP_008766159.1">
    <molecule id="P62944-2"/>
    <property type="nucleotide sequence ID" value="XM_008767937.4"/>
</dbReference>
<dbReference type="RefSeq" id="XP_008766160.1">
    <molecule id="P62944-2"/>
    <property type="nucleotide sequence ID" value="XM_008767938.3"/>
</dbReference>
<dbReference type="RefSeq" id="XP_008766161.1">
    <molecule id="P62944-1"/>
    <property type="nucleotide sequence ID" value="XM_008767939.4"/>
</dbReference>
<dbReference type="RefSeq" id="XP_017452462.1">
    <molecule id="P62944-2"/>
    <property type="nucleotide sequence ID" value="XM_017596973.3"/>
</dbReference>
<dbReference type="RefSeq" id="XP_063124412.1">
    <molecule id="P62944-2"/>
    <property type="nucleotide sequence ID" value="XM_063268342.1"/>
</dbReference>
<dbReference type="RefSeq" id="XP_063124413.1">
    <molecule id="P62944-2"/>
    <property type="nucleotide sequence ID" value="XM_063268343.1"/>
</dbReference>
<dbReference type="RefSeq" id="XP_063124414.1">
    <molecule id="P62944-2"/>
    <property type="nucleotide sequence ID" value="XM_063268344.1"/>
</dbReference>
<dbReference type="RefSeq" id="XP_063124415.1">
    <molecule id="P62944-1"/>
    <property type="nucleotide sequence ID" value="XM_063268345.1"/>
</dbReference>
<dbReference type="RefSeq" id="XP_063124416.1">
    <molecule id="P62944-1"/>
    <property type="nucleotide sequence ID" value="XM_063268346.1"/>
</dbReference>
<dbReference type="RefSeq" id="XP_063124417.1">
    <molecule id="P62944-1"/>
    <property type="nucleotide sequence ID" value="XM_063268347.1"/>
</dbReference>
<dbReference type="RefSeq" id="XP_063124418.1">
    <molecule id="P62944-1"/>
    <property type="nucleotide sequence ID" value="XM_063268348.1"/>
</dbReference>
<dbReference type="RefSeq" id="XP_063124419.1">
    <molecule id="P62944-1"/>
    <property type="nucleotide sequence ID" value="XM_063268349.1"/>
</dbReference>
<dbReference type="PDB" id="3H1Z">
    <property type="method" value="X-ray"/>
    <property type="resolution" value="1.83 A"/>
    <property type="chains" value="A=701-937"/>
</dbReference>
<dbReference type="PDB" id="3HS9">
    <property type="method" value="X-ray"/>
    <property type="resolution" value="2.15 A"/>
    <property type="chains" value="A=701-937"/>
</dbReference>
<dbReference type="PDB" id="6OWT">
    <property type="method" value="EM"/>
    <property type="resolution" value="3.80 A"/>
    <property type="chains" value="B=1-591"/>
</dbReference>
<dbReference type="PDBsum" id="3H1Z"/>
<dbReference type="PDBsum" id="3HS9"/>
<dbReference type="PDBsum" id="6OWT"/>
<dbReference type="EMDB" id="EMD-20217"/>
<dbReference type="SMR" id="P62944"/>
<dbReference type="BioGRID" id="250830">
    <property type="interactions" value="29"/>
</dbReference>
<dbReference type="CORUM" id="P62944"/>
<dbReference type="DIP" id="DIP-40944N"/>
<dbReference type="FunCoup" id="P62944">
    <property type="interactions" value="3940"/>
</dbReference>
<dbReference type="IntAct" id="P62944">
    <property type="interactions" value="7"/>
</dbReference>
<dbReference type="MINT" id="P62944"/>
<dbReference type="STRING" id="10116.ENSRNOP00000072290"/>
<dbReference type="GlyGen" id="P62944">
    <property type="glycosylation" value="2 sites, 1 O-linked glycan (1 site)"/>
</dbReference>
<dbReference type="iPTMnet" id="P62944"/>
<dbReference type="PhosphoSitePlus" id="P62944"/>
<dbReference type="SwissPalm" id="P62944"/>
<dbReference type="jPOST" id="P62944"/>
<dbReference type="PaxDb" id="10116-ENSRNOP00000068516"/>
<dbReference type="Ensembl" id="ENSRNOT00000088198.2">
    <molecule id="P62944-2"/>
    <property type="protein sequence ID" value="ENSRNOP00000070905.1"/>
    <property type="gene ID" value="ENSRNOG00000061543.2"/>
</dbReference>
<dbReference type="GeneID" id="140670"/>
<dbReference type="KEGG" id="rno:140670"/>
<dbReference type="AGR" id="RGD:71048"/>
<dbReference type="CTD" id="163"/>
<dbReference type="RGD" id="71048">
    <property type="gene designation" value="Ap2b1"/>
</dbReference>
<dbReference type="VEuPathDB" id="HostDB:ENSRNOG00000061543"/>
<dbReference type="eggNOG" id="KOG1061">
    <property type="taxonomic scope" value="Eukaryota"/>
</dbReference>
<dbReference type="GeneTree" id="ENSGT00940000155206"/>
<dbReference type="HOGENOM" id="CLU_006320_1_1_1"/>
<dbReference type="InParanoid" id="P62944"/>
<dbReference type="OrthoDB" id="34995at9989"/>
<dbReference type="TreeFam" id="TF300318"/>
<dbReference type="Reactome" id="R-RNO-177504">
    <property type="pathway name" value="Retrograde neurotrophin signalling"/>
</dbReference>
<dbReference type="Reactome" id="R-RNO-2132295">
    <property type="pathway name" value="MHC class II antigen presentation"/>
</dbReference>
<dbReference type="Reactome" id="R-RNO-416993">
    <property type="pathway name" value="Trafficking of GluR2-containing AMPA receptors"/>
</dbReference>
<dbReference type="Reactome" id="R-RNO-437239">
    <property type="pathway name" value="Recycling pathway of L1"/>
</dbReference>
<dbReference type="Reactome" id="R-RNO-5099900">
    <property type="pathway name" value="WNT5A-dependent internalization of FZD4"/>
</dbReference>
<dbReference type="Reactome" id="R-RNO-5140745">
    <property type="pathway name" value="WNT5A-dependent internalization of FZD2, FZD5 and ROR2"/>
</dbReference>
<dbReference type="Reactome" id="R-RNO-8856825">
    <property type="pathway name" value="Cargo recognition for clathrin-mediated endocytosis"/>
</dbReference>
<dbReference type="Reactome" id="R-RNO-8856828">
    <property type="pathway name" value="Clathrin-mediated endocytosis"/>
</dbReference>
<dbReference type="Reactome" id="R-RNO-8866427">
    <property type="pathway name" value="VLDLR internalisation and degradation"/>
</dbReference>
<dbReference type="Reactome" id="R-RNO-8964038">
    <property type="pathway name" value="LDL clearance"/>
</dbReference>
<dbReference type="EvolutionaryTrace" id="P62944"/>
<dbReference type="PRO" id="PR:P62944"/>
<dbReference type="Proteomes" id="UP000002494">
    <property type="component" value="Chromosome 10"/>
</dbReference>
<dbReference type="Bgee" id="ENSRNOG00000061543">
    <property type="expression patterns" value="Expressed in testis and 19 other cell types or tissues"/>
</dbReference>
<dbReference type="ExpressionAtlas" id="P62944">
    <property type="expression patterns" value="baseline and differential"/>
</dbReference>
<dbReference type="GO" id="GO:0030122">
    <property type="term" value="C:AP-2 adaptor complex"/>
    <property type="evidence" value="ECO:0000266"/>
    <property type="project" value="RGD"/>
</dbReference>
<dbReference type="GO" id="GO:0030119">
    <property type="term" value="C:AP-type membrane coat adaptor complex"/>
    <property type="evidence" value="ECO:0000304"/>
    <property type="project" value="ProtInc"/>
</dbReference>
<dbReference type="GO" id="GO:0030131">
    <property type="term" value="C:clathrin adaptor complex"/>
    <property type="evidence" value="ECO:0000266"/>
    <property type="project" value="RGD"/>
</dbReference>
<dbReference type="GO" id="GO:0030118">
    <property type="term" value="C:clathrin coat"/>
    <property type="evidence" value="ECO:0000314"/>
    <property type="project" value="BHF-UCL"/>
</dbReference>
<dbReference type="GO" id="GO:0098894">
    <property type="term" value="C:extrinsic component of presynaptic endocytic zone membrane"/>
    <property type="evidence" value="ECO:0000314"/>
    <property type="project" value="SynGO"/>
</dbReference>
<dbReference type="GO" id="GO:0098978">
    <property type="term" value="C:glutamatergic synapse"/>
    <property type="evidence" value="ECO:0000314"/>
    <property type="project" value="SynGO"/>
</dbReference>
<dbReference type="GO" id="GO:0098843">
    <property type="term" value="C:postsynaptic endocytic zone"/>
    <property type="evidence" value="ECO:0000314"/>
    <property type="project" value="SynGO"/>
</dbReference>
<dbReference type="GO" id="GO:0045202">
    <property type="term" value="C:synapse"/>
    <property type="evidence" value="ECO:0000266"/>
    <property type="project" value="RGD"/>
</dbReference>
<dbReference type="GO" id="GO:0008021">
    <property type="term" value="C:synaptic vesicle"/>
    <property type="evidence" value="ECO:0000314"/>
    <property type="project" value="SynGO"/>
</dbReference>
<dbReference type="GO" id="GO:0030276">
    <property type="term" value="F:clathrin binding"/>
    <property type="evidence" value="ECO:0000314"/>
    <property type="project" value="BHF-UCL"/>
</dbReference>
<dbReference type="GO" id="GO:0044877">
    <property type="term" value="F:protein-containing complex binding"/>
    <property type="evidence" value="ECO:0000353"/>
    <property type="project" value="RGD"/>
</dbReference>
<dbReference type="GO" id="GO:0035904">
    <property type="term" value="P:aorta development"/>
    <property type="evidence" value="ECO:0000266"/>
    <property type="project" value="RGD"/>
</dbReference>
<dbReference type="GO" id="GO:0003279">
    <property type="term" value="P:cardiac septum development"/>
    <property type="evidence" value="ECO:0000266"/>
    <property type="project" value="RGD"/>
</dbReference>
<dbReference type="GO" id="GO:0048268">
    <property type="term" value="P:clathrin coat assembly"/>
    <property type="evidence" value="ECO:0000314"/>
    <property type="project" value="BHF-UCL"/>
</dbReference>
<dbReference type="GO" id="GO:0072583">
    <property type="term" value="P:clathrin-dependent endocytosis"/>
    <property type="evidence" value="ECO:0000266"/>
    <property type="project" value="RGD"/>
</dbReference>
<dbReference type="GO" id="GO:0060976">
    <property type="term" value="P:coronary vasculature development"/>
    <property type="evidence" value="ECO:0000266"/>
    <property type="project" value="RGD"/>
</dbReference>
<dbReference type="GO" id="GO:0007507">
    <property type="term" value="P:heart development"/>
    <property type="evidence" value="ECO:0000266"/>
    <property type="project" value="RGD"/>
</dbReference>
<dbReference type="GO" id="GO:0006886">
    <property type="term" value="P:intracellular protein transport"/>
    <property type="evidence" value="ECO:0007669"/>
    <property type="project" value="InterPro"/>
</dbReference>
<dbReference type="GO" id="GO:0001822">
    <property type="term" value="P:kidney development"/>
    <property type="evidence" value="ECO:0000266"/>
    <property type="project" value="RGD"/>
</dbReference>
<dbReference type="GO" id="GO:0045807">
    <property type="term" value="P:positive regulation of endocytosis"/>
    <property type="evidence" value="ECO:0000315"/>
    <property type="project" value="RGD"/>
</dbReference>
<dbReference type="GO" id="GO:1905477">
    <property type="term" value="P:positive regulation of protein localization to membrane"/>
    <property type="evidence" value="ECO:0000315"/>
    <property type="project" value="RGD"/>
</dbReference>
<dbReference type="GO" id="GO:0098884">
    <property type="term" value="P:postsynaptic neurotransmitter receptor internalization"/>
    <property type="evidence" value="ECO:0000314"/>
    <property type="project" value="SynGO"/>
</dbReference>
<dbReference type="GO" id="GO:0048488">
    <property type="term" value="P:synaptic vesicle endocytosis"/>
    <property type="evidence" value="ECO:0000266"/>
    <property type="project" value="RGD"/>
</dbReference>
<dbReference type="GO" id="GO:0003281">
    <property type="term" value="P:ventricular septum development"/>
    <property type="evidence" value="ECO:0000266"/>
    <property type="project" value="RGD"/>
</dbReference>
<dbReference type="DisProt" id="DP02887"/>
<dbReference type="FunFam" id="1.25.10.10:FF:000002">
    <property type="entry name" value="AP complex subunit beta"/>
    <property type="match status" value="1"/>
</dbReference>
<dbReference type="FunFam" id="2.60.40.1150:FF:000001">
    <property type="entry name" value="AP complex subunit beta"/>
    <property type="match status" value="1"/>
</dbReference>
<dbReference type="FunFam" id="3.30.310.10:FF:000003">
    <property type="entry name" value="AP complex subunit beta"/>
    <property type="match status" value="1"/>
</dbReference>
<dbReference type="Gene3D" id="2.60.40.1150">
    <property type="match status" value="1"/>
</dbReference>
<dbReference type="Gene3D" id="1.25.10.10">
    <property type="entry name" value="Leucine-rich Repeat Variant"/>
    <property type="match status" value="1"/>
</dbReference>
<dbReference type="Gene3D" id="3.30.310.10">
    <property type="entry name" value="TATA-Binding Protein"/>
    <property type="match status" value="1"/>
</dbReference>
<dbReference type="IDEAL" id="IID50159"/>
<dbReference type="InterPro" id="IPR026739">
    <property type="entry name" value="AP_beta"/>
</dbReference>
<dbReference type="InterPro" id="IPR016342">
    <property type="entry name" value="AP_complex_bsu_1_2_4"/>
</dbReference>
<dbReference type="InterPro" id="IPR011989">
    <property type="entry name" value="ARM-like"/>
</dbReference>
<dbReference type="InterPro" id="IPR016024">
    <property type="entry name" value="ARM-type_fold"/>
</dbReference>
<dbReference type="InterPro" id="IPR000225">
    <property type="entry name" value="Armadillo"/>
</dbReference>
<dbReference type="InterPro" id="IPR015151">
    <property type="entry name" value="B-adaptin_app_sub_C"/>
</dbReference>
<dbReference type="InterPro" id="IPR002553">
    <property type="entry name" value="Clathrin/coatomer_adapt-like_N"/>
</dbReference>
<dbReference type="InterPro" id="IPR008152">
    <property type="entry name" value="Clathrin_a/b/g-adaptin_app_Ig"/>
</dbReference>
<dbReference type="InterPro" id="IPR013041">
    <property type="entry name" value="Clathrin_app_Ig-like_sf"/>
</dbReference>
<dbReference type="InterPro" id="IPR013037">
    <property type="entry name" value="Clathrin_b-adaptin_app_Ig-like"/>
</dbReference>
<dbReference type="InterPro" id="IPR009028">
    <property type="entry name" value="Coatomer/calthrin_app_sub_C"/>
</dbReference>
<dbReference type="InterPro" id="IPR012295">
    <property type="entry name" value="TBP_dom_sf"/>
</dbReference>
<dbReference type="PANTHER" id="PTHR11134">
    <property type="entry name" value="ADAPTOR COMPLEX SUBUNIT BETA FAMILY MEMBER"/>
    <property type="match status" value="1"/>
</dbReference>
<dbReference type="Pfam" id="PF01602">
    <property type="entry name" value="Adaptin_N"/>
    <property type="match status" value="1"/>
</dbReference>
<dbReference type="Pfam" id="PF02883">
    <property type="entry name" value="Alpha_adaptinC2"/>
    <property type="match status" value="1"/>
</dbReference>
<dbReference type="Pfam" id="PF09066">
    <property type="entry name" value="B2-adapt-app_C"/>
    <property type="match status" value="1"/>
</dbReference>
<dbReference type="PIRSF" id="PIRSF002291">
    <property type="entry name" value="AP_complex_beta"/>
    <property type="match status" value="1"/>
</dbReference>
<dbReference type="SMART" id="SM00809">
    <property type="entry name" value="Alpha_adaptinC2"/>
    <property type="match status" value="1"/>
</dbReference>
<dbReference type="SMART" id="SM00185">
    <property type="entry name" value="ARM"/>
    <property type="match status" value="2"/>
</dbReference>
<dbReference type="SMART" id="SM01020">
    <property type="entry name" value="B2-adapt-app_C"/>
    <property type="match status" value="1"/>
</dbReference>
<dbReference type="SUPFAM" id="SSF48371">
    <property type="entry name" value="ARM repeat"/>
    <property type="match status" value="1"/>
</dbReference>
<dbReference type="SUPFAM" id="SSF49348">
    <property type="entry name" value="Clathrin adaptor appendage domain"/>
    <property type="match status" value="1"/>
</dbReference>
<dbReference type="SUPFAM" id="SSF55711">
    <property type="entry name" value="Subdomain of clathrin and coatomer appendage domain"/>
    <property type="match status" value="1"/>
</dbReference>
<evidence type="ECO:0000250" key="1"/>
<evidence type="ECO:0000250" key="2">
    <source>
        <dbReference type="UniProtKB" id="P63010"/>
    </source>
</evidence>
<evidence type="ECO:0000250" key="3">
    <source>
        <dbReference type="UniProtKB" id="Q9DBG3"/>
    </source>
</evidence>
<evidence type="ECO:0000269" key="4">
    <source>
    </source>
</evidence>
<evidence type="ECO:0000269" key="5">
    <source>
    </source>
</evidence>
<evidence type="ECO:0000269" key="6">
    <source>
    </source>
</evidence>
<evidence type="ECO:0000269" key="7">
    <source>
    </source>
</evidence>
<evidence type="ECO:0000269" key="8">
    <source>
    </source>
</evidence>
<evidence type="ECO:0000303" key="9">
    <source>
    </source>
</evidence>
<evidence type="ECO:0000305" key="10"/>
<evidence type="ECO:0007744" key="11">
    <source>
    </source>
</evidence>
<evidence type="ECO:0007829" key="12">
    <source>
        <dbReference type="PDB" id="3H1Z"/>
    </source>
</evidence>
<name>AP2B1_RAT</name>
<sequence length="937" mass="104553">MTDSKYFTTNKKGEIFELKAELNNEKKEKRKEAVKKVIAAMTVGKDVSSLFPDVVNCMQTDNLELKKLVYLYLMNYAKSQPDMAIMAVNSFVKDCEDPNPLIRALAVRTMGCIRVDKITEYLCEPLRKCLKDEDPYVRKTAAVCVAKLHDINAQMVEDQGFLDSLRDLIADSNPMVVANAVAALSEISESHPNSNLLDLNPQNINKLLTALNECTEWGQIFILDCLSNYNPKDDREAQSICERVTPRLSHANSAVVLSAVKVLMKFLELLPKDSDYYNMLLKKLAPPLVTLLSGEPEVQYVALRNINLIVQKRPEILKQEIKVFFVKYNDPIYVKLEKLDIMIRLASQANIAQVLAELKEYATEVDVDFVRKAVRAIGRCAIKVEQSAERCVSTLLDLIQTKVNYVVQEAIVVIRDIFRKYPNKYESIIATLCENLDSLDEPDARAAMIWIVGEYAERIDNADELLESFLEGFHDESTQVQLTLLTAIVKLFLKKPSETQELVQQVLSLATQDSDNPDLRDRGYIYWRLLSTDPVTAKEVVLSEKPLISEETDLIEPTLLDELICHIGSLASVYHKPPNAFVEGSHGIHRKHLPIHHGSTDAGDSPVGTTTATNLEQPQVIPSQGDLLGDLLNLDLGPPVNVPQVSSMQMGAVDLLGGGLDSLVGQSFIPSSVPATFAPSPTPAVVSSGLNDLFELSTGIGMAPGGYVAPKAVWLPAVKAKGLEISGTFTHRQGHIYMEMNFTNKALQHMTDFAIQFNKNSFGVIPSTPLAIHTPLMPNQSIDVSLPLNTLGPVMKMEPLNNLQVAVKNNIDVFYFSCLIPLNVLFVEDGKMERQVFLATWKDIPNENELQFQIKECHLNADTVSSKLQNNNVYTIAKRNVEGQDMLYQSLKLTNGIWILAELRIQPGNPNYTLSLKCRAPEVSQYIYQVYDSILKN</sequence>
<reference key="1">
    <citation type="journal article" date="1990" name="J. Biol. Chem.">
        <title>Conservation and diversity in families of coated vesicle adaptins.</title>
        <authorList>
            <person name="Ponnambalam S."/>
            <person name="Robinson M.S."/>
            <person name="Jackson A.P."/>
            <person name="Peiperl L."/>
            <person name="Parham P."/>
        </authorList>
    </citation>
    <scope>NUCLEOTIDE SEQUENCE [MRNA] (ISOFORM 1)</scope>
    <source>
        <tissue>Lymphocyte</tissue>
    </source>
</reference>
<reference key="2">
    <citation type="journal article" date="1989" name="Proc. Natl. Acad. Sci. U.S.A.">
        <title>Structural and functional division into two domains of the large (100- to 115-kDa) chains of the clathrin-associated protein complex AP-2.</title>
        <authorList>
            <person name="Kirchhausen T."/>
            <person name="Nathanson K.L."/>
            <person name="Matsui W."/>
            <person name="Vaisberg A."/>
            <person name="Chow E.P."/>
            <person name="Burne C."/>
            <person name="Keen J.H."/>
            <person name="Davis A.E."/>
        </authorList>
    </citation>
    <scope>NUCLEOTIDE SEQUENCE [MRNA] (ISOFORM 2)</scope>
    <source>
        <tissue>Brain</tissue>
    </source>
</reference>
<reference key="3">
    <citation type="journal article" date="1995" name="J. Biol. Chem.">
        <title>The alpha chain of the AP-2 adaptor is a clathrin binding subunit.</title>
        <authorList>
            <person name="Goodman O.B. Jr."/>
            <person name="Keen J.H."/>
        </authorList>
    </citation>
    <scope>INTERACTION WITH CLATHRIN</scope>
</reference>
<reference key="4">
    <citation type="journal article" date="2003" name="Cell Struct. Funct.">
        <title>Adaptor protein complexes as the key regulators of protein sorting in the post-Golgi network.</title>
        <authorList>
            <person name="Nakatsu F."/>
            <person name="Ohno H."/>
        </authorList>
    </citation>
    <scope>FUNCTION OF THE AP-2 COMPLEX IN CLATHRIN-MEDIATED ENDOCYTOSIS</scope>
</reference>
<reference key="5">
    <citation type="journal article" date="2004" name="Annu. Rev. Cell Dev. Biol.">
        <title>Adaptors for clathrin coats: structure and function.</title>
        <authorList>
            <person name="Owen D.J."/>
            <person name="Collins B.M."/>
            <person name="Evans P.R."/>
        </authorList>
    </citation>
    <scope>FUNCTION OF THE AP-2 COMPLEX IN CLATHRIN-MEDIATED ENDOCYTOSIS</scope>
</reference>
<reference key="6">
    <citation type="journal article" date="2009" name="J. Biol. Chem.">
        <title>Clathrin regulates the association of PIPKIgamma661 with the AP-2 adaptor beta2 appendage.</title>
        <authorList>
            <person name="Thieman J.R."/>
            <person name="Mishra S.K."/>
            <person name="Ling K."/>
            <person name="Doray B."/>
            <person name="Anderson R.A."/>
            <person name="Traub L.M."/>
        </authorList>
    </citation>
    <scope>INTERACTION WITH PIP5K1C</scope>
    <scope>MUTAGENESIS OF GLN-756; GLN-804; ALA-806; LYS-808 AND TYR-815</scope>
</reference>
<reference key="7">
    <citation type="journal article" date="2012" name="Nat. Cell Biol.">
        <title>Distinct and separable activities of the endocytic clathrin-coat components Fcho1/2 and AP-2 in developmental patterning.</title>
        <authorList>
            <person name="Umasankar P.K."/>
            <person name="Sanker S."/>
            <person name="Thieman J.R."/>
            <person name="Chakraborty S."/>
            <person name="Wendland B."/>
            <person name="Tsang M."/>
            <person name="Traub L.M."/>
        </authorList>
    </citation>
    <scope>INTERACTION WITH FCHO1</scope>
</reference>
<reference key="8">
    <citation type="journal article" date="2012" name="Nat. Commun.">
        <title>Quantitative maps of protein phosphorylation sites across 14 different rat organs and tissues.</title>
        <authorList>
            <person name="Lundby A."/>
            <person name="Secher A."/>
            <person name="Lage K."/>
            <person name="Nordsborg N.B."/>
            <person name="Dmytriyev A."/>
            <person name="Lundby C."/>
            <person name="Olsen J.V."/>
        </authorList>
    </citation>
    <scope>PHOSPHORYLATION [LARGE SCALE ANALYSIS] AT TYR-928</scope>
    <scope>IDENTIFICATION BY MASS SPECTROMETRY [LARGE SCALE ANALYSIS]</scope>
</reference>
<comment type="function">
    <text evidence="1 2 4 5">Component of the adaptor protein complex 2 (AP-2). Adaptor protein complexes function in protein transport via transport vesicles in different membrane traffic pathways. Adaptor protein complexes are vesicle coat components and appear to be involved in cargo selection and vesicle formation. AP-2 is involved in clathrin-dependent endocytosis in which cargo proteins are incorporated into vesicles surrounded by clathrin (clathrin-coated vesicles, CCVs) which are destined for fusion with the early endosome. The clathrin lattice serves as a mechanical scaffold but is itself unable to bind directly to membrane components. Clathrin-associated adaptor protein (AP) complexes which can bind directly to both the clathrin lattice and to the lipid and protein components of membranes are considered to be the major clathrin adaptors contributing the CCV formation. AP-2 also serves as a cargo receptor to selectively sort the membrane proteins involved in receptor-mediated endocytosis. AP-2 seems to play a role in the recycling of synaptic vesicle membranes from the presynaptic surface. AP-2 recognizes Y-X-X-[FILMV] (Y-X-X-Phi) and [ED]-X-X-X-L-[LI] endocytosis signal motifs within the cytosolic tails of transmembrane cargo molecules. AP-2 may also play a role in maintaining normal post-endocytic trafficking through the ARF6-regulated, non-clathrin pathway. During long-term potentiation in hippocampal neurons, AP-2 is responsible for the endocytosis of ADAM10 (By similarity). The AP-2 beta subunit acts via its C-terminal appendage domain as a scaffolding platform for endocytic accessory proteins; at least some clathrin-associated sorting proteins (CLASPs) are recognized by their [DE]-X(1,2)-F-X-X-[FL]-X-X-X-R motif. The AP-2 beta subunit binds to clathrin heavy chain, promoting clathrin lattice assembly; clathrin displaces at least some CLASPs from AP2B1 which probably then can be positioned for further coat assembly (By similarity).</text>
</comment>
<comment type="subunit">
    <text evidence="2 3 6 7 8">Adaptor protein complex 2 (AP-2) is a heterotetramer composed of two large adaptins (alpha-type subunit AP2A1 or AP2A2 and beta-type subunit AP2B1), a medium adaptin (mu-type subunit AP2M1) and a small adaptin (sigma-type subunit AP2S1) (By similarity). Interacts with EPN1 (By similarity). Interacts with EPS15; clathrin competes with EPS15 (By similarity). Interacts with SNAP91; clathrin competes with SNAP91 (By similarity). Interacts with CLTC; clathrin competes with EPS15, SNAP91 and PIP5K1C (PubMed:7559550). Interacts with LDLRAP1 (By similarity). Interacts with AMPH and BIN1 (By similarity). Interacts with ARF6 (GDP-bound) (By similarity). Interacts (dephosphorylated at Tyr-737) with ARRB1; phosphorylation of AP2B1 at Tyr-737 disrupts the interaction (By similarity). Interacts with SLC2A8 (By similarity). Interacts with SCYL1 and SCYL2 (By similarity). Interacts with TGFBR1 and TGFBR2 (By similarity). Interacts with PIP5K1C; clathrin competes with PIP5K1C (PubMed:19287005). Interacts with DENND1B (By similarity). Interacts with FCHO1 (PubMed:22484487). Interacts with RFTN1 (By similarity). Interacts with KIAA1107 (By similarity). Together with AP2A1 or AP2A2 and AP2M1, it interacts with ADAM10; this interaction facilitates ADAM10 endocytosis from the plasma membrane during long-term potentiation in hippocampal neurons (By similarity).</text>
</comment>
<comment type="interaction">
    <interactant intactId="EBI-7008032">
        <id>P62944-2</id>
    </interactant>
    <interactant intactId="EBI-7007865">
        <id>Q3MUI1</id>
        <label>Numb</label>
    </interactant>
    <organismsDiffer>false</organismsDiffer>
    <experiments>2</experiments>
</comment>
<comment type="subcellular location">
    <subcellularLocation>
        <location evidence="1">Cell membrane</location>
    </subcellularLocation>
    <subcellularLocation>
        <location evidence="1">Membrane</location>
        <location evidence="1">Coated pit</location>
        <topology evidence="1">Peripheral membrane protein</topology>
        <orientation evidence="1">Cytoplasmic side</orientation>
    </subcellularLocation>
    <text evidence="1">AP-2 appears to be excluded from internalizing CCVs and to disengage from sites of endocytosis seconds before internalization of the nascent CCV.</text>
</comment>
<comment type="alternative products">
    <event type="alternative splicing"/>
    <isoform>
        <id>P62944-1</id>
        <name>1</name>
        <sequence type="displayed"/>
    </isoform>
    <isoform>
        <id>P62944-2</id>
        <name>2</name>
        <sequence type="described" ref="VSP_011492"/>
    </isoform>
</comment>
<comment type="miscellaneous">
    <molecule>Isoform 2</molecule>
    <text evidence="10">Brain specific.</text>
</comment>
<comment type="similarity">
    <text evidence="10">Belongs to the adaptor complexes large subunit family.</text>
</comment>
<protein>
    <recommendedName>
        <fullName>AP-2 complex subunit beta</fullName>
    </recommendedName>
    <alternativeName>
        <fullName>AP105B</fullName>
    </alternativeName>
    <alternativeName>
        <fullName>Adaptor protein complex AP-2 subunit beta</fullName>
    </alternativeName>
    <alternativeName>
        <fullName>Adaptor-related protein complex 2 subunit beta</fullName>
    </alternativeName>
    <alternativeName>
        <fullName>Beta-2-adaptin</fullName>
    </alternativeName>
    <alternativeName>
        <fullName>Beta-adaptin</fullName>
    </alternativeName>
    <alternativeName>
        <fullName>Clathrin assembly protein complex 2 beta large chain</fullName>
    </alternativeName>
    <alternativeName>
        <fullName>Plasma membrane adaptor HA2/AP2 adaptin beta subunit</fullName>
    </alternativeName>
</protein>